<keyword id="KW-0963">Cytoplasm</keyword>
<keyword id="KW-0251">Elongation factor</keyword>
<keyword id="KW-0342">GTP-binding</keyword>
<keyword id="KW-0547">Nucleotide-binding</keyword>
<keyword id="KW-0648">Protein biosynthesis</keyword>
<keyword id="KW-1185">Reference proteome</keyword>
<feature type="chain" id="PRO_1000091766" description="Elongation factor G">
    <location>
        <begin position="1"/>
        <end position="713"/>
    </location>
</feature>
<feature type="domain" description="tr-type G">
    <location>
        <begin position="8"/>
        <end position="290"/>
    </location>
</feature>
<feature type="binding site" evidence="1">
    <location>
        <begin position="17"/>
        <end position="24"/>
    </location>
    <ligand>
        <name>GTP</name>
        <dbReference type="ChEBI" id="CHEBI:37565"/>
    </ligand>
</feature>
<feature type="binding site" evidence="1">
    <location>
        <begin position="88"/>
        <end position="92"/>
    </location>
    <ligand>
        <name>GTP</name>
        <dbReference type="ChEBI" id="CHEBI:37565"/>
    </ligand>
</feature>
<feature type="binding site" evidence="1">
    <location>
        <begin position="142"/>
        <end position="145"/>
    </location>
    <ligand>
        <name>GTP</name>
        <dbReference type="ChEBI" id="CHEBI:37565"/>
    </ligand>
</feature>
<comment type="function">
    <text evidence="1">Catalyzes the GTP-dependent ribosomal translocation step during translation elongation. During this step, the ribosome changes from the pre-translocational (PRE) to the post-translocational (POST) state as the newly formed A-site-bound peptidyl-tRNA and P-site-bound deacylated tRNA move to the P and E sites, respectively. Catalyzes the coordinated movement of the two tRNA molecules, the mRNA and conformational changes in the ribosome.</text>
</comment>
<comment type="subcellular location">
    <subcellularLocation>
        <location evidence="1">Cytoplasm</location>
    </subcellularLocation>
</comment>
<comment type="similarity">
    <text evidence="1">Belongs to the TRAFAC class translation factor GTPase superfamily. Classic translation factor GTPase family. EF-G/EF-2 subfamily.</text>
</comment>
<protein>
    <recommendedName>
        <fullName evidence="1">Elongation factor G</fullName>
        <shortName evidence="1">EF-G</shortName>
    </recommendedName>
</protein>
<name>EFG_STRMK</name>
<dbReference type="EMBL" id="AM743169">
    <property type="protein sequence ID" value="CAQ44472.1"/>
    <property type="molecule type" value="Genomic_DNA"/>
</dbReference>
<dbReference type="RefSeq" id="WP_012479235.1">
    <property type="nucleotide sequence ID" value="NC_010943.1"/>
</dbReference>
<dbReference type="SMR" id="B2FQ42"/>
<dbReference type="EnsemblBacteria" id="CAQ44472">
    <property type="protein sequence ID" value="CAQ44472"/>
    <property type="gene ID" value="Smlt0903"/>
</dbReference>
<dbReference type="KEGG" id="sml:Smlt0903"/>
<dbReference type="PATRIC" id="fig|522373.3.peg.871"/>
<dbReference type="eggNOG" id="COG0480">
    <property type="taxonomic scope" value="Bacteria"/>
</dbReference>
<dbReference type="HOGENOM" id="CLU_002794_4_1_6"/>
<dbReference type="Proteomes" id="UP000008840">
    <property type="component" value="Chromosome"/>
</dbReference>
<dbReference type="GO" id="GO:0005737">
    <property type="term" value="C:cytoplasm"/>
    <property type="evidence" value="ECO:0007669"/>
    <property type="project" value="UniProtKB-SubCell"/>
</dbReference>
<dbReference type="GO" id="GO:0005525">
    <property type="term" value="F:GTP binding"/>
    <property type="evidence" value="ECO:0007669"/>
    <property type="project" value="UniProtKB-UniRule"/>
</dbReference>
<dbReference type="GO" id="GO:0003924">
    <property type="term" value="F:GTPase activity"/>
    <property type="evidence" value="ECO:0007669"/>
    <property type="project" value="InterPro"/>
</dbReference>
<dbReference type="GO" id="GO:0097216">
    <property type="term" value="F:guanosine tetraphosphate binding"/>
    <property type="evidence" value="ECO:0007669"/>
    <property type="project" value="UniProtKB-ARBA"/>
</dbReference>
<dbReference type="GO" id="GO:0003746">
    <property type="term" value="F:translation elongation factor activity"/>
    <property type="evidence" value="ECO:0007669"/>
    <property type="project" value="UniProtKB-UniRule"/>
</dbReference>
<dbReference type="GO" id="GO:0032790">
    <property type="term" value="P:ribosome disassembly"/>
    <property type="evidence" value="ECO:0007669"/>
    <property type="project" value="TreeGrafter"/>
</dbReference>
<dbReference type="CDD" id="cd01886">
    <property type="entry name" value="EF-G"/>
    <property type="match status" value="1"/>
</dbReference>
<dbReference type="CDD" id="cd16262">
    <property type="entry name" value="EFG_III"/>
    <property type="match status" value="1"/>
</dbReference>
<dbReference type="CDD" id="cd01434">
    <property type="entry name" value="EFG_mtEFG1_IV"/>
    <property type="match status" value="1"/>
</dbReference>
<dbReference type="CDD" id="cd03713">
    <property type="entry name" value="EFG_mtEFG_C"/>
    <property type="match status" value="1"/>
</dbReference>
<dbReference type="CDD" id="cd04088">
    <property type="entry name" value="EFG_mtEFG_II"/>
    <property type="match status" value="1"/>
</dbReference>
<dbReference type="FunFam" id="2.40.30.10:FF:000006">
    <property type="entry name" value="Elongation factor G"/>
    <property type="match status" value="1"/>
</dbReference>
<dbReference type="FunFam" id="3.30.230.10:FF:000003">
    <property type="entry name" value="Elongation factor G"/>
    <property type="match status" value="1"/>
</dbReference>
<dbReference type="FunFam" id="3.30.70.240:FF:000001">
    <property type="entry name" value="Elongation factor G"/>
    <property type="match status" value="1"/>
</dbReference>
<dbReference type="FunFam" id="3.30.70.870:FF:000001">
    <property type="entry name" value="Elongation factor G"/>
    <property type="match status" value="1"/>
</dbReference>
<dbReference type="FunFam" id="3.40.50.300:FF:000029">
    <property type="entry name" value="Elongation factor G"/>
    <property type="match status" value="1"/>
</dbReference>
<dbReference type="Gene3D" id="3.30.230.10">
    <property type="match status" value="1"/>
</dbReference>
<dbReference type="Gene3D" id="3.30.70.240">
    <property type="match status" value="1"/>
</dbReference>
<dbReference type="Gene3D" id="3.30.70.870">
    <property type="entry name" value="Elongation Factor G (Translational Gtpase), domain 3"/>
    <property type="match status" value="1"/>
</dbReference>
<dbReference type="Gene3D" id="3.40.50.300">
    <property type="entry name" value="P-loop containing nucleotide triphosphate hydrolases"/>
    <property type="match status" value="1"/>
</dbReference>
<dbReference type="Gene3D" id="2.40.30.10">
    <property type="entry name" value="Translation factors"/>
    <property type="match status" value="1"/>
</dbReference>
<dbReference type="HAMAP" id="MF_00054_B">
    <property type="entry name" value="EF_G_EF_2_B"/>
    <property type="match status" value="1"/>
</dbReference>
<dbReference type="InterPro" id="IPR041095">
    <property type="entry name" value="EFG_II"/>
</dbReference>
<dbReference type="InterPro" id="IPR009022">
    <property type="entry name" value="EFG_III"/>
</dbReference>
<dbReference type="InterPro" id="IPR035647">
    <property type="entry name" value="EFG_III/V"/>
</dbReference>
<dbReference type="InterPro" id="IPR047872">
    <property type="entry name" value="EFG_IV"/>
</dbReference>
<dbReference type="InterPro" id="IPR035649">
    <property type="entry name" value="EFG_V"/>
</dbReference>
<dbReference type="InterPro" id="IPR000640">
    <property type="entry name" value="EFG_V-like"/>
</dbReference>
<dbReference type="InterPro" id="IPR004161">
    <property type="entry name" value="EFTu-like_2"/>
</dbReference>
<dbReference type="InterPro" id="IPR031157">
    <property type="entry name" value="G_TR_CS"/>
</dbReference>
<dbReference type="InterPro" id="IPR027417">
    <property type="entry name" value="P-loop_NTPase"/>
</dbReference>
<dbReference type="InterPro" id="IPR020568">
    <property type="entry name" value="Ribosomal_Su5_D2-typ_SF"/>
</dbReference>
<dbReference type="InterPro" id="IPR014721">
    <property type="entry name" value="Ribsml_uS5_D2-typ_fold_subgr"/>
</dbReference>
<dbReference type="InterPro" id="IPR005225">
    <property type="entry name" value="Small_GTP-bd"/>
</dbReference>
<dbReference type="InterPro" id="IPR000795">
    <property type="entry name" value="T_Tr_GTP-bd_dom"/>
</dbReference>
<dbReference type="InterPro" id="IPR009000">
    <property type="entry name" value="Transl_B-barrel_sf"/>
</dbReference>
<dbReference type="InterPro" id="IPR004540">
    <property type="entry name" value="Transl_elong_EFG/EF2"/>
</dbReference>
<dbReference type="InterPro" id="IPR005517">
    <property type="entry name" value="Transl_elong_EFG/EF2_IV"/>
</dbReference>
<dbReference type="NCBIfam" id="TIGR00484">
    <property type="entry name" value="EF-G"/>
    <property type="match status" value="1"/>
</dbReference>
<dbReference type="NCBIfam" id="NF009381">
    <property type="entry name" value="PRK12740.1-5"/>
    <property type="match status" value="1"/>
</dbReference>
<dbReference type="NCBIfam" id="TIGR00231">
    <property type="entry name" value="small_GTP"/>
    <property type="match status" value="1"/>
</dbReference>
<dbReference type="PANTHER" id="PTHR43261:SF1">
    <property type="entry name" value="RIBOSOME-RELEASING FACTOR 2, MITOCHONDRIAL"/>
    <property type="match status" value="1"/>
</dbReference>
<dbReference type="PANTHER" id="PTHR43261">
    <property type="entry name" value="TRANSLATION ELONGATION FACTOR G-RELATED"/>
    <property type="match status" value="1"/>
</dbReference>
<dbReference type="Pfam" id="PF00679">
    <property type="entry name" value="EFG_C"/>
    <property type="match status" value="1"/>
</dbReference>
<dbReference type="Pfam" id="PF14492">
    <property type="entry name" value="EFG_III"/>
    <property type="match status" value="1"/>
</dbReference>
<dbReference type="Pfam" id="PF03764">
    <property type="entry name" value="EFG_IV"/>
    <property type="match status" value="1"/>
</dbReference>
<dbReference type="Pfam" id="PF00009">
    <property type="entry name" value="GTP_EFTU"/>
    <property type="match status" value="1"/>
</dbReference>
<dbReference type="Pfam" id="PF03144">
    <property type="entry name" value="GTP_EFTU_D2"/>
    <property type="match status" value="1"/>
</dbReference>
<dbReference type="PRINTS" id="PR00315">
    <property type="entry name" value="ELONGATNFCT"/>
</dbReference>
<dbReference type="SMART" id="SM00838">
    <property type="entry name" value="EFG_C"/>
    <property type="match status" value="1"/>
</dbReference>
<dbReference type="SMART" id="SM00889">
    <property type="entry name" value="EFG_IV"/>
    <property type="match status" value="1"/>
</dbReference>
<dbReference type="SUPFAM" id="SSF54980">
    <property type="entry name" value="EF-G C-terminal domain-like"/>
    <property type="match status" value="2"/>
</dbReference>
<dbReference type="SUPFAM" id="SSF52540">
    <property type="entry name" value="P-loop containing nucleoside triphosphate hydrolases"/>
    <property type="match status" value="1"/>
</dbReference>
<dbReference type="SUPFAM" id="SSF54211">
    <property type="entry name" value="Ribosomal protein S5 domain 2-like"/>
    <property type="match status" value="1"/>
</dbReference>
<dbReference type="SUPFAM" id="SSF50447">
    <property type="entry name" value="Translation proteins"/>
    <property type="match status" value="1"/>
</dbReference>
<dbReference type="PROSITE" id="PS00301">
    <property type="entry name" value="G_TR_1"/>
    <property type="match status" value="1"/>
</dbReference>
<dbReference type="PROSITE" id="PS51722">
    <property type="entry name" value="G_TR_2"/>
    <property type="match status" value="1"/>
</dbReference>
<evidence type="ECO:0000255" key="1">
    <source>
        <dbReference type="HAMAP-Rule" id="MF_00054"/>
    </source>
</evidence>
<organism>
    <name type="scientific">Stenotrophomonas maltophilia (strain K279a)</name>
    <dbReference type="NCBI Taxonomy" id="522373"/>
    <lineage>
        <taxon>Bacteria</taxon>
        <taxon>Pseudomonadati</taxon>
        <taxon>Pseudomonadota</taxon>
        <taxon>Gammaproteobacteria</taxon>
        <taxon>Lysobacterales</taxon>
        <taxon>Lysobacteraceae</taxon>
        <taxon>Stenotrophomonas</taxon>
        <taxon>Stenotrophomonas maltophilia group</taxon>
    </lineage>
</organism>
<accession>B2FQ42</accession>
<sequence>MARSTPIERYRNFGIMAHIDAGKTTTSERILFYTGKSHKIGEVHDGAATMDWMEQEQERGITIQSAATTAFWKGMDKSLPEHRFNIIDTPGHVDFTIEVERSLRVLDGAVFVLCAVGGVQPQSETVWRQANKYHVPRIAFVNKMDRTGANFQKVVGQLKAKLGAVAVPMQLPIGAEDNFKGVVDLLKMKAIHWDEASQGMKFEYSDIPADLQAAAEEARQFMVETAAEASEELMEKYLGGEELAEAEIINALRTRTLATEIVPMYCGSAFKNKGVQAMLDGVIQLLPSPVDVPDVKGVDVDDDTVEMTRKSDDKAPFSSLAFKIITDPFVGALTFFRVYSGTLNGGDTVLNSVKGKKERIGRILQMHSNNREEIKEVLAGDIAAAVGLKDTTTGDTLCAVDAPIILERMTFPEPVISMAVEPKTKSDQEKMGLALGRLAQEDPSFRVKTDEESGQTIISGMGELHLDIIVDRLKREFNVEANVGAPQVAYRETITLADVKSDYKHAKQSGGKGQYGHVVIELSPITAADRADPKLAPAIKDDFLFINDITGGVIPKEFIPSVEKGLRETITSGPLAGFPVVDVKVKLVFGSYHDVDSSEMAFKLASSMAFKQGFAKAKPVLLEPIMKVEIVTPEDYQGDVMGDVSRRRGVLQGSDTTGDGSASIINAMIPLGEMFGYATALRSQTQGRATFTMEFDHYEPAPTNIAEAVMKKG</sequence>
<proteinExistence type="inferred from homology"/>
<reference key="1">
    <citation type="journal article" date="2008" name="Genome Biol.">
        <title>The complete genome, comparative and functional analysis of Stenotrophomonas maltophilia reveals an organism heavily shielded by drug resistance determinants.</title>
        <authorList>
            <person name="Crossman L.C."/>
            <person name="Gould V.C."/>
            <person name="Dow J.M."/>
            <person name="Vernikos G.S."/>
            <person name="Okazaki A."/>
            <person name="Sebaihia M."/>
            <person name="Saunders D."/>
            <person name="Arrowsmith C."/>
            <person name="Carver T."/>
            <person name="Peters N."/>
            <person name="Adlem E."/>
            <person name="Kerhornou A."/>
            <person name="Lord A."/>
            <person name="Murphy L."/>
            <person name="Seeger K."/>
            <person name="Squares R."/>
            <person name="Rutter S."/>
            <person name="Quail M.A."/>
            <person name="Rajandream M.A."/>
            <person name="Harris D."/>
            <person name="Churcher C."/>
            <person name="Bentley S.D."/>
            <person name="Parkhill J."/>
            <person name="Thomson N.R."/>
            <person name="Avison M.B."/>
        </authorList>
    </citation>
    <scope>NUCLEOTIDE SEQUENCE [LARGE SCALE GENOMIC DNA]</scope>
    <source>
        <strain>K279a</strain>
    </source>
</reference>
<gene>
    <name evidence="1" type="primary">fusA</name>
    <name type="ordered locus">Smlt0903</name>
</gene>